<feature type="chain" id="PRO_1000096233" description="Iron-sulfur cluster assembly protein CyaY">
    <location>
        <begin position="1"/>
        <end position="104"/>
    </location>
</feature>
<comment type="function">
    <text evidence="1">Involved in iron-sulfur (Fe-S) cluster assembly. May act as a regulator of Fe-S biogenesis.</text>
</comment>
<comment type="similarity">
    <text evidence="1">Belongs to the frataxin family.</text>
</comment>
<proteinExistence type="inferred from homology"/>
<evidence type="ECO:0000255" key="1">
    <source>
        <dbReference type="HAMAP-Rule" id="MF_00142"/>
    </source>
</evidence>
<name>CYAY_ALISL</name>
<organism>
    <name type="scientific">Aliivibrio salmonicida (strain LFI1238)</name>
    <name type="common">Vibrio salmonicida (strain LFI1238)</name>
    <dbReference type="NCBI Taxonomy" id="316275"/>
    <lineage>
        <taxon>Bacteria</taxon>
        <taxon>Pseudomonadati</taxon>
        <taxon>Pseudomonadota</taxon>
        <taxon>Gammaproteobacteria</taxon>
        <taxon>Vibrionales</taxon>
        <taxon>Vibrionaceae</taxon>
        <taxon>Aliivibrio</taxon>
    </lineage>
</organism>
<dbReference type="EMBL" id="FM178379">
    <property type="protein sequence ID" value="CAQ77809.1"/>
    <property type="molecule type" value="Genomic_DNA"/>
</dbReference>
<dbReference type="RefSeq" id="WP_012549017.1">
    <property type="nucleotide sequence ID" value="NC_011312.1"/>
</dbReference>
<dbReference type="SMR" id="B6EP83"/>
<dbReference type="KEGG" id="vsa:VSAL_I0124"/>
<dbReference type="eggNOG" id="COG1965">
    <property type="taxonomic scope" value="Bacteria"/>
</dbReference>
<dbReference type="HOGENOM" id="CLU_080880_3_0_6"/>
<dbReference type="Proteomes" id="UP000001730">
    <property type="component" value="Chromosome 1"/>
</dbReference>
<dbReference type="GO" id="GO:0005829">
    <property type="term" value="C:cytosol"/>
    <property type="evidence" value="ECO:0007669"/>
    <property type="project" value="TreeGrafter"/>
</dbReference>
<dbReference type="GO" id="GO:0008199">
    <property type="term" value="F:ferric iron binding"/>
    <property type="evidence" value="ECO:0007669"/>
    <property type="project" value="InterPro"/>
</dbReference>
<dbReference type="GO" id="GO:0008198">
    <property type="term" value="F:ferrous iron binding"/>
    <property type="evidence" value="ECO:0007669"/>
    <property type="project" value="TreeGrafter"/>
</dbReference>
<dbReference type="GO" id="GO:0016226">
    <property type="term" value="P:iron-sulfur cluster assembly"/>
    <property type="evidence" value="ECO:0007669"/>
    <property type="project" value="UniProtKB-UniRule"/>
</dbReference>
<dbReference type="CDD" id="cd00503">
    <property type="entry name" value="Frataxin"/>
    <property type="match status" value="1"/>
</dbReference>
<dbReference type="Gene3D" id="3.30.920.10">
    <property type="entry name" value="Frataxin/CyaY"/>
    <property type="match status" value="1"/>
</dbReference>
<dbReference type="HAMAP" id="MF_00142">
    <property type="entry name" value="CyaY"/>
    <property type="match status" value="1"/>
</dbReference>
<dbReference type="InterPro" id="IPR047584">
    <property type="entry name" value="CyaY"/>
</dbReference>
<dbReference type="InterPro" id="IPR002908">
    <property type="entry name" value="Frataxin/CyaY"/>
</dbReference>
<dbReference type="InterPro" id="IPR036524">
    <property type="entry name" value="Frataxin/CyaY_sf"/>
</dbReference>
<dbReference type="InterPro" id="IPR020895">
    <property type="entry name" value="Frataxin_CS"/>
</dbReference>
<dbReference type="NCBIfam" id="TIGR03421">
    <property type="entry name" value="FeS_CyaY"/>
    <property type="match status" value="1"/>
</dbReference>
<dbReference type="PANTHER" id="PTHR16821">
    <property type="entry name" value="FRATAXIN"/>
    <property type="match status" value="1"/>
</dbReference>
<dbReference type="PANTHER" id="PTHR16821:SF2">
    <property type="entry name" value="FRATAXIN, MITOCHONDRIAL"/>
    <property type="match status" value="1"/>
</dbReference>
<dbReference type="Pfam" id="PF01491">
    <property type="entry name" value="Frataxin_Cyay"/>
    <property type="match status" value="1"/>
</dbReference>
<dbReference type="SMART" id="SM01219">
    <property type="entry name" value="Frataxin_Cyay"/>
    <property type="match status" value="1"/>
</dbReference>
<dbReference type="SUPFAM" id="SSF55387">
    <property type="entry name" value="Frataxin/Nqo15-like"/>
    <property type="match status" value="1"/>
</dbReference>
<dbReference type="PROSITE" id="PS01344">
    <property type="entry name" value="FRATAXIN_1"/>
    <property type="match status" value="1"/>
</dbReference>
<dbReference type="PROSITE" id="PS50810">
    <property type="entry name" value="FRATAXIN_2"/>
    <property type="match status" value="1"/>
</dbReference>
<reference key="1">
    <citation type="journal article" date="2008" name="BMC Genomics">
        <title>The genome sequence of the fish pathogen Aliivibrio salmonicida strain LFI1238 shows extensive evidence of gene decay.</title>
        <authorList>
            <person name="Hjerde E."/>
            <person name="Lorentzen M.S."/>
            <person name="Holden M.T."/>
            <person name="Seeger K."/>
            <person name="Paulsen S."/>
            <person name="Bason N."/>
            <person name="Churcher C."/>
            <person name="Harris D."/>
            <person name="Norbertczak H."/>
            <person name="Quail M.A."/>
            <person name="Sanders S."/>
            <person name="Thurston S."/>
            <person name="Parkhill J."/>
            <person name="Willassen N.P."/>
            <person name="Thomson N.R."/>
        </authorList>
    </citation>
    <scope>NUCLEOTIDE SEQUENCE [LARGE SCALE GENOMIC DNA]</scope>
    <source>
        <strain>LFI1238</strain>
    </source>
</reference>
<protein>
    <recommendedName>
        <fullName evidence="1">Iron-sulfur cluster assembly protein CyaY</fullName>
    </recommendedName>
</protein>
<accession>B6EP83</accession>
<sequence length="104" mass="11986">MNNTEFHELVDAKLQLLEDMIDDSGADIEPIITGNVLTLEFENRSQIVINKQEPMHEIWLASKSGGFHFAYTDEKWTCSKTGVEFIEMVKEECQKHADEVIQWA</sequence>
<gene>
    <name evidence="1" type="primary">cyaY</name>
    <name type="ordered locus">VSAL_I0124</name>
</gene>
<keyword id="KW-0408">Iron</keyword>
<keyword id="KW-0479">Metal-binding</keyword>